<protein>
    <recommendedName>
        <fullName>Pyruvate, phosphate dikinase, chloroplastic</fullName>
        <ecNumber>2.7.9.1</ecNumber>
    </recommendedName>
    <alternativeName>
        <fullName>Cold-sensitive pyruvate, orthophosphate dikinase</fullName>
    </alternativeName>
    <alternativeName>
        <fullName>Pyruvate, orthophosphate dikinase</fullName>
    </alternativeName>
</protein>
<sequence>MMSSLSVEGMLLKSARESCLPARVNQRRNGDLRRLNHHRQSSFVRCLTPARVSRPELRSSGLTPPRAVLNPVSPPVTTAKKRVFTFGKGRSEGNRDMKSLLGGKGANLAEMSSIGLSVPPGLTISTEACEEYQQNGKSLPPGLWDEISEGLDYVQKEMSASLGDPSKPLPLSVRSGAAISMPGMMDTVLNLGLNDEVVAGLAGKSGARFAYDSYRRFLDMFGNVVMGIPHSLFDEKLEQMKAEKGIHLDTDLTAADLKDLVEKYKNVYVEAKGEKFPTDPKKQLELAVNAVFDSWDSPRANKYRSINQITGLKGTAVNIQSMVFGNMGNTSGTGVLFTRNPSTGEKKLYGEFLINAQGEDVVAGIRTPEDLGTMETCMPDAYKELVENCEILEGHYKDMMDIEFTVQENRLWMLQCRTGKRTGKGAVRIAVDMVNEWLIDTRTAIKRVETQHLDQLLHPQFEDPSAYKSHVVATGLPASPGAAVGQVCFSAEDAETWHAQGKSAILVRTETSPEDVGGMHAAAGILTARGGMTSHAAVVARGWGKCCVSGCADIRVNDDMKIFTIGDRVIKEGDWLSLNGTTGEVILGKQLLAPPAMSNDLEIFMSWADQARRLKVMANADTPNDALTARNNGAQGIGLCRTEHMFFASDERIKAVRKMIMAVTPEQRKVALDLLLPYQRSDFEGIFRAMDGLPVTIRLLDPPLHEFLPEGDLEHIVNELAVDTGMSADEIYSKIENLSEVNPMLGFRGCRLGISYPELTEMQVRAIFQAAVSMTNQGVTVIPEIMVPLVGTPQELRHQISVIRGVAANVFAEMGVTLEYKVGTMIEIPRAALIAEEIGKEADFFSFGTNDLTQMTFGYSRDDVGKFLQIYLAQGILQHDPFEVIDQKGVGQLIKMATEKGRAANPNLKVGICGEHGGEPSSVAFFDGVGLDYVSCSPFRVPIARLAAAQVIV</sequence>
<proteinExistence type="evidence at protein level"/>
<comment type="function">
    <text>Formation of phosphoenolpyruvate, which is the primary acceptor of CO(2) in C4 and some Crassulacean acid metabolism plants.</text>
</comment>
<comment type="catalytic activity">
    <reaction>
        <text>pyruvate + phosphate + ATP = phosphoenolpyruvate + AMP + diphosphate + H(+)</text>
        <dbReference type="Rhea" id="RHEA:10756"/>
        <dbReference type="ChEBI" id="CHEBI:15361"/>
        <dbReference type="ChEBI" id="CHEBI:15378"/>
        <dbReference type="ChEBI" id="CHEBI:30616"/>
        <dbReference type="ChEBI" id="CHEBI:33019"/>
        <dbReference type="ChEBI" id="CHEBI:43474"/>
        <dbReference type="ChEBI" id="CHEBI:58702"/>
        <dbReference type="ChEBI" id="CHEBI:456215"/>
        <dbReference type="EC" id="2.7.9.1"/>
    </reaction>
</comment>
<comment type="cofactor">
    <cofactor evidence="2">
        <name>Mg(2+)</name>
        <dbReference type="ChEBI" id="CHEBI:18420"/>
    </cofactor>
</comment>
<comment type="activity regulation">
    <text evidence="1 5">Activated by light-induced dephosphorylation. Inhibited by dark-induced phosphorylation. Both reactions are catalyzed by PDRP1 (By similarity). Inactivated by cold due to the dissociation of the homotetramer.</text>
</comment>
<comment type="biophysicochemical properties">
    <kinetics>
        <KM evidence="5">73 uM for pyruvate</KM>
        <KM evidence="5">25 uM for ATP</KM>
        <KM evidence="5">118 uM for phosphate</KM>
    </kinetics>
    <temperatureDependence>
        <text evidence="5">Loss of activity below 10 degrees Celsius.</text>
    </temperatureDependence>
</comment>
<comment type="pathway">
    <text>Photosynthesis; C4 acid pathway.</text>
</comment>
<comment type="subunit">
    <text>Homotetramer.</text>
</comment>
<comment type="subcellular location">
    <subcellularLocation>
        <location>Plastid</location>
        <location>Chloroplast</location>
    </subcellularLocation>
</comment>
<comment type="domain">
    <text evidence="1">The N-terminal domain contains the ATP/Pi binding site, the central domain the pyrophosphate/phosphate carrier histidine, and the C-terminal domain the pyruvate binding site.</text>
</comment>
<comment type="domain">
    <text>The C-terminal domain (829-953) is involved in cold sensitivity.</text>
</comment>
<comment type="PTM">
    <text evidence="1">Phosphorylation of Thr-533 in the dark inactivates the enzyme. Dephosphorylation upon light stimulation reactivates the enzyme (By similarity).</text>
</comment>
<comment type="miscellaneous">
    <text evidence="1">The reaction takes place in three steps, mediated by a phosphocarrier histidine residue located on the surface of the central domain. The two first partial reactions are catalyzed at an active site located on the N-terminal domain, and the third partial reaction is catalyzed at an active site located on the C-terminal domain. For catalytic turnover, the central domain swivels from the concave surface of the N-terminal domain to that of the C-terminal domain (By similarity).</text>
</comment>
<comment type="miscellaneous">
    <text evidence="1">A short cytoplasmic isoform may be produced by alternative promoter usage.</text>
</comment>
<comment type="similarity">
    <text evidence="6">Belongs to the PEP-utilizing enzyme family.</text>
</comment>
<reference key="1">
    <citation type="journal article" date="1995" name="Plant Mol. Biol.">
        <title>Cold stability of pyruvate, orthophosphate dikinase of Flaveria brownii.</title>
        <authorList>
            <person name="Usami S."/>
            <person name="Ohta S."/>
            <person name="Komari T."/>
            <person name="Burnell J.N."/>
        </authorList>
    </citation>
    <scope>NUCLEOTIDE SEQUENCE [MRNA]</scope>
    <scope>PROTEIN SEQUENCE OF 78-86</scope>
    <source>
        <tissue>Leaf</tissue>
    </source>
</reference>
<reference key="2">
    <citation type="journal article" date="1997" name="FEBS Lett.">
        <title>Identification of the amino acid residues responsible for cold tolerance in Flaveria brownii pyruvate,orthophosphate dikinase.</title>
        <authorList>
            <person name="Ohta S."/>
            <person name="Usami S."/>
            <person name="Ueki J."/>
            <person name="Kumashiro T."/>
            <person name="Komari T."/>
            <person name="Burnell J.N."/>
        </authorList>
    </citation>
    <scope>BIOPHYSICOCHEMICAL PROPERTIES</scope>
    <scope>ACTIVITY REGULATION</scope>
    <scope>MUTAGENESIS OF GLN-869; ALA-873; ILE-885 AND ILE-952</scope>
</reference>
<accession>Q39735</accession>
<organism>
    <name type="scientific">Flaveria bidentis</name>
    <name type="common">Coastal plain yellowtops</name>
    <name type="synonym">Ethulia bidentis</name>
    <dbReference type="NCBI Taxonomy" id="4224"/>
    <lineage>
        <taxon>Eukaryota</taxon>
        <taxon>Viridiplantae</taxon>
        <taxon>Streptophyta</taxon>
        <taxon>Embryophyta</taxon>
        <taxon>Tracheophyta</taxon>
        <taxon>Spermatophyta</taxon>
        <taxon>Magnoliopsida</taxon>
        <taxon>eudicotyledons</taxon>
        <taxon>Gunneridae</taxon>
        <taxon>Pentapetalae</taxon>
        <taxon>asterids</taxon>
        <taxon>campanulids</taxon>
        <taxon>Asterales</taxon>
        <taxon>Asteraceae</taxon>
        <taxon>Asteroideae</taxon>
        <taxon>Heliantheae alliance</taxon>
        <taxon>Tageteae</taxon>
        <taxon>Flaveria</taxon>
    </lineage>
</organism>
<feature type="transit peptide" description="Chloroplast" evidence="4">
    <location>
        <begin position="1"/>
        <end position="77"/>
    </location>
</feature>
<feature type="chain" id="PRO_0000023559" description="Pyruvate, phosphate dikinase, chloroplastic">
    <location>
        <begin position="78"/>
        <end position="953"/>
    </location>
</feature>
<feature type="region of interest" description="Disordered" evidence="3">
    <location>
        <begin position="55"/>
        <end position="74"/>
    </location>
</feature>
<feature type="active site" description="Tele-phosphohistidine intermediate" evidence="2">
    <location>
        <position position="535"/>
    </location>
</feature>
<feature type="active site" description="Proton donor" evidence="2">
    <location>
        <position position="913"/>
    </location>
</feature>
<feature type="binding site" evidence="2">
    <location>
        <position position="641"/>
    </location>
    <ligand>
        <name>substrate</name>
    </ligand>
</feature>
<feature type="binding site" evidence="2">
    <location>
        <position position="698"/>
    </location>
    <ligand>
        <name>substrate</name>
    </ligand>
</feature>
<feature type="binding site" evidence="2">
    <location>
        <position position="827"/>
    </location>
    <ligand>
        <name>Mg(2+)</name>
        <dbReference type="ChEBI" id="CHEBI:18420"/>
    </ligand>
</feature>
<feature type="binding site" evidence="2">
    <location>
        <position position="827"/>
    </location>
    <ligand>
        <name>substrate</name>
    </ligand>
</feature>
<feature type="binding site" evidence="2">
    <location>
        <position position="848"/>
    </location>
    <ligand>
        <name>substrate</name>
    </ligand>
</feature>
<feature type="binding site" evidence="2">
    <location>
        <position position="849"/>
    </location>
    <ligand>
        <name>substrate</name>
    </ligand>
</feature>
<feature type="binding site" evidence="2">
    <location>
        <position position="850"/>
    </location>
    <ligand>
        <name>substrate</name>
    </ligand>
</feature>
<feature type="binding site" evidence="2">
    <location>
        <position position="851"/>
    </location>
    <ligand>
        <name>Mg(2+)</name>
        <dbReference type="ChEBI" id="CHEBI:18420"/>
    </ligand>
</feature>
<feature type="binding site" evidence="2">
    <location>
        <position position="851"/>
    </location>
    <ligand>
        <name>substrate</name>
    </ligand>
</feature>
<feature type="modified residue" description="Phosphothreonine; by PDRP1" evidence="1">
    <location>
        <position position="533"/>
    </location>
</feature>
<feature type="mutagenesis site" description="60% activity in the cold. 60% activity in the cold; when associated with S-873." evidence="5">
    <original>Q</original>
    <variation>P</variation>
    <location>
        <position position="869"/>
    </location>
</feature>
<feature type="mutagenesis site" description="10% activity in the cold. 60% activity in the cold; when associated with P-869." evidence="5">
    <original>A</original>
    <variation>S</variation>
    <location>
        <position position="873"/>
    </location>
</feature>
<feature type="mutagenesis site" description="50% activity in the cold. 65% activity in the cold; when associated with V-952." evidence="5">
    <original>I</original>
    <variation>L</variation>
    <location>
        <position position="885"/>
    </location>
</feature>
<feature type="mutagenesis site" description="25% activity in the cold. 65% activity in the cold; when associated with L-885." evidence="5">
    <original>I</original>
    <variation>V</variation>
    <location>
        <position position="952"/>
    </location>
</feature>
<name>PPDK_FLABI</name>
<dbReference type="EC" id="2.7.9.1"/>
<dbReference type="EMBL" id="U08400">
    <property type="protein sequence ID" value="AAA86941.1"/>
    <property type="molecule type" value="mRNA"/>
</dbReference>
<dbReference type="PIR" id="S56650">
    <property type="entry name" value="S56650"/>
</dbReference>
<dbReference type="SMR" id="Q39735"/>
<dbReference type="BRENDA" id="2.7.9.1">
    <property type="organism ID" value="2264"/>
</dbReference>
<dbReference type="SABIO-RK" id="Q39735"/>
<dbReference type="UniPathway" id="UPA00322"/>
<dbReference type="GO" id="GO:0009507">
    <property type="term" value="C:chloroplast"/>
    <property type="evidence" value="ECO:0007669"/>
    <property type="project" value="UniProtKB-SubCell"/>
</dbReference>
<dbReference type="GO" id="GO:0005524">
    <property type="term" value="F:ATP binding"/>
    <property type="evidence" value="ECO:0007669"/>
    <property type="project" value="UniProtKB-KW"/>
</dbReference>
<dbReference type="GO" id="GO:0016301">
    <property type="term" value="F:kinase activity"/>
    <property type="evidence" value="ECO:0007669"/>
    <property type="project" value="UniProtKB-KW"/>
</dbReference>
<dbReference type="GO" id="GO:0046872">
    <property type="term" value="F:metal ion binding"/>
    <property type="evidence" value="ECO:0007669"/>
    <property type="project" value="UniProtKB-KW"/>
</dbReference>
<dbReference type="GO" id="GO:0050242">
    <property type="term" value="F:pyruvate, phosphate dikinase activity"/>
    <property type="evidence" value="ECO:0007669"/>
    <property type="project" value="UniProtKB-EC"/>
</dbReference>
<dbReference type="GO" id="GO:0015979">
    <property type="term" value="P:photosynthesis"/>
    <property type="evidence" value="ECO:0007669"/>
    <property type="project" value="UniProtKB-KW"/>
</dbReference>
<dbReference type="FunFam" id="3.20.20.60:FF:000040">
    <property type="entry name" value="Pyruvate, phosphate dikinase, chloroplastic"/>
    <property type="match status" value="1"/>
</dbReference>
<dbReference type="FunFam" id="3.30.470.20:FF:000038">
    <property type="entry name" value="Pyruvate, phosphate dikinase, chloroplastic"/>
    <property type="match status" value="1"/>
</dbReference>
<dbReference type="FunFam" id="3.50.30.10:FF:000009">
    <property type="entry name" value="Pyruvate, phosphate dikinase, chloroplastic"/>
    <property type="match status" value="1"/>
</dbReference>
<dbReference type="Gene3D" id="1.20.80.30">
    <property type="match status" value="1"/>
</dbReference>
<dbReference type="Gene3D" id="3.30.1490.20">
    <property type="entry name" value="ATP-grasp fold, A domain"/>
    <property type="match status" value="1"/>
</dbReference>
<dbReference type="Gene3D" id="3.30.470.20">
    <property type="entry name" value="ATP-grasp fold, B domain"/>
    <property type="match status" value="1"/>
</dbReference>
<dbReference type="Gene3D" id="3.20.20.60">
    <property type="entry name" value="Phosphoenolpyruvate-binding domains"/>
    <property type="match status" value="1"/>
</dbReference>
<dbReference type="Gene3D" id="3.50.30.10">
    <property type="entry name" value="Phosphohistidine domain"/>
    <property type="match status" value="1"/>
</dbReference>
<dbReference type="Gene3D" id="1.10.189.10">
    <property type="entry name" value="Pyruvate Phosphate Dikinase, domain 2"/>
    <property type="match status" value="1"/>
</dbReference>
<dbReference type="InterPro" id="IPR013815">
    <property type="entry name" value="ATP_grasp_subdomain_1"/>
</dbReference>
<dbReference type="InterPro" id="IPR008279">
    <property type="entry name" value="PEP-util_enz_mobile_dom"/>
</dbReference>
<dbReference type="InterPro" id="IPR018274">
    <property type="entry name" value="PEP_util_AS"/>
</dbReference>
<dbReference type="InterPro" id="IPR000121">
    <property type="entry name" value="PEP_util_C"/>
</dbReference>
<dbReference type="InterPro" id="IPR023151">
    <property type="entry name" value="PEP_util_CS"/>
</dbReference>
<dbReference type="InterPro" id="IPR036637">
    <property type="entry name" value="Phosphohistidine_dom_sf"/>
</dbReference>
<dbReference type="InterPro" id="IPR002192">
    <property type="entry name" value="PPDK_AMP/ATP-bd"/>
</dbReference>
<dbReference type="InterPro" id="IPR010121">
    <property type="entry name" value="Pyruvate_phosphate_dikinase"/>
</dbReference>
<dbReference type="InterPro" id="IPR015813">
    <property type="entry name" value="Pyrv/PenolPyrv_kinase-like_dom"/>
</dbReference>
<dbReference type="InterPro" id="IPR040442">
    <property type="entry name" value="Pyrv_kinase-like_dom_sf"/>
</dbReference>
<dbReference type="NCBIfam" id="NF004531">
    <property type="entry name" value="PRK05878.1"/>
    <property type="match status" value="1"/>
</dbReference>
<dbReference type="NCBIfam" id="TIGR01828">
    <property type="entry name" value="pyru_phos_dikin"/>
    <property type="match status" value="1"/>
</dbReference>
<dbReference type="PANTHER" id="PTHR22931">
    <property type="entry name" value="PHOSPHOENOLPYRUVATE DIKINASE-RELATED"/>
    <property type="match status" value="1"/>
</dbReference>
<dbReference type="PANTHER" id="PTHR22931:SF9">
    <property type="entry name" value="PYRUVATE, PHOSPHATE DIKINASE 1, CHLOROPLASTIC"/>
    <property type="match status" value="1"/>
</dbReference>
<dbReference type="Pfam" id="PF00391">
    <property type="entry name" value="PEP-utilizers"/>
    <property type="match status" value="1"/>
</dbReference>
<dbReference type="Pfam" id="PF02896">
    <property type="entry name" value="PEP-utilizers_C"/>
    <property type="match status" value="1"/>
</dbReference>
<dbReference type="Pfam" id="PF01326">
    <property type="entry name" value="PPDK_N"/>
    <property type="match status" value="2"/>
</dbReference>
<dbReference type="PIRSF" id="PIRSF000853">
    <property type="entry name" value="PPDK"/>
    <property type="match status" value="1"/>
</dbReference>
<dbReference type="SUPFAM" id="SSF56059">
    <property type="entry name" value="Glutathione synthetase ATP-binding domain-like"/>
    <property type="match status" value="1"/>
</dbReference>
<dbReference type="SUPFAM" id="SSF51621">
    <property type="entry name" value="Phosphoenolpyruvate/pyruvate domain"/>
    <property type="match status" value="1"/>
</dbReference>
<dbReference type="SUPFAM" id="SSF52009">
    <property type="entry name" value="Phosphohistidine domain"/>
    <property type="match status" value="1"/>
</dbReference>
<dbReference type="PROSITE" id="PS00742">
    <property type="entry name" value="PEP_ENZYMES_2"/>
    <property type="match status" value="1"/>
</dbReference>
<dbReference type="PROSITE" id="PS00370">
    <property type="entry name" value="PEP_ENZYMES_PHOS_SITE"/>
    <property type="match status" value="1"/>
</dbReference>
<keyword id="KW-0067">ATP-binding</keyword>
<keyword id="KW-0150">Chloroplast</keyword>
<keyword id="KW-0903">Direct protein sequencing</keyword>
<keyword id="KW-0418">Kinase</keyword>
<keyword id="KW-0460">Magnesium</keyword>
<keyword id="KW-0479">Metal-binding</keyword>
<keyword id="KW-0547">Nucleotide-binding</keyword>
<keyword id="KW-0597">Phosphoprotein</keyword>
<keyword id="KW-0602">Photosynthesis</keyword>
<keyword id="KW-0934">Plastid</keyword>
<keyword id="KW-0808">Transferase</keyword>
<keyword id="KW-0809">Transit peptide</keyword>
<evidence type="ECO:0000250" key="1"/>
<evidence type="ECO:0000250" key="2">
    <source>
        <dbReference type="UniProtKB" id="P11155"/>
    </source>
</evidence>
<evidence type="ECO:0000256" key="3">
    <source>
        <dbReference type="SAM" id="MobiDB-lite"/>
    </source>
</evidence>
<evidence type="ECO:0000269" key="4">
    <source>
    </source>
</evidence>
<evidence type="ECO:0000269" key="5">
    <source>
    </source>
</evidence>
<evidence type="ECO:0000305" key="6"/>